<keyword id="KW-0002">3D-structure</keyword>
<keyword id="KW-0479">Metal-binding</keyword>
<keyword id="KW-1185">Reference proteome</keyword>
<keyword id="KW-0687">Ribonucleoprotein</keyword>
<keyword id="KW-0689">Ribosomal protein</keyword>
<keyword id="KW-0694">RNA-binding</keyword>
<keyword id="KW-0699">rRNA-binding</keyword>
<keyword id="KW-0862">Zinc</keyword>
<keyword id="KW-0863">Zinc-finger</keyword>
<accession>Q8U475</accession>
<sequence>MKYPKQIRTYCPFCKKHTIHKVERVKKRPRSELSAGQRRFRRILKGYGGFPRPKPEGREKPVKKLDLRFRCTECGKAHTRGRGFRVKKFELVEG</sequence>
<gene>
    <name evidence="1" type="primary">rpl44e</name>
    <name type="ordered locus">PF0217</name>
</gene>
<evidence type="ECO:0000255" key="1">
    <source>
        <dbReference type="HAMAP-Rule" id="MF_01476"/>
    </source>
</evidence>
<evidence type="ECO:0000269" key="2">
    <source>
    </source>
</evidence>
<evidence type="ECO:0007744" key="3">
    <source>
        <dbReference type="PDB" id="4V6U"/>
    </source>
</evidence>
<name>RL44E_PYRFU</name>
<comment type="function">
    <text evidence="1">Binds to the 23S rRNA.</text>
</comment>
<comment type="cofactor">
    <cofactor evidence="1">
        <name>Zn(2+)</name>
        <dbReference type="ChEBI" id="CHEBI:29105"/>
    </cofactor>
    <text evidence="1">Binds 1 zinc ion per subunit.</text>
</comment>
<comment type="subunit">
    <text evidence="1 2">Part of the 50S ribosomal subunit.</text>
</comment>
<comment type="similarity">
    <text evidence="1">Belongs to the eukaryotic ribosomal protein eL42 family.</text>
</comment>
<proteinExistence type="evidence at protein level"/>
<feature type="chain" id="PRO_0000149154" description="Large ribosomal subunit protein eL42">
    <location>
        <begin position="1"/>
        <end position="94"/>
    </location>
</feature>
<feature type="zinc finger region" description="C4-type" evidence="1">
    <location>
        <begin position="11"/>
        <end position="74"/>
    </location>
</feature>
<feature type="binding site" evidence="1">
    <location>
        <position position="11"/>
    </location>
    <ligand>
        <name>Zn(2+)</name>
        <dbReference type="ChEBI" id="CHEBI:29105"/>
    </ligand>
</feature>
<feature type="binding site" evidence="1">
    <location>
        <position position="14"/>
    </location>
    <ligand>
        <name>Zn(2+)</name>
        <dbReference type="ChEBI" id="CHEBI:29105"/>
    </ligand>
</feature>
<feature type="binding site" evidence="1">
    <location>
        <position position="71"/>
    </location>
    <ligand>
        <name>Zn(2+)</name>
        <dbReference type="ChEBI" id="CHEBI:29105"/>
    </ligand>
</feature>
<feature type="binding site" evidence="1">
    <location>
        <position position="74"/>
    </location>
    <ligand>
        <name>Zn(2+)</name>
        <dbReference type="ChEBI" id="CHEBI:29105"/>
    </ligand>
</feature>
<dbReference type="EMBL" id="AE009950">
    <property type="protein sequence ID" value="AAL80341.1"/>
    <property type="molecule type" value="Genomic_DNA"/>
</dbReference>
<dbReference type="RefSeq" id="WP_011011330.1">
    <property type="nucleotide sequence ID" value="NZ_CP023154.1"/>
</dbReference>
<dbReference type="PDB" id="4V4N">
    <property type="method" value="EM"/>
    <property type="resolution" value="9.00 A"/>
    <property type="chains" value="j=1-94"/>
</dbReference>
<dbReference type="PDB" id="4V6U">
    <property type="method" value="EM"/>
    <property type="resolution" value="6.60 A"/>
    <property type="chains" value="Bj=1-94"/>
</dbReference>
<dbReference type="PDBsum" id="4V4N"/>
<dbReference type="PDBsum" id="4V6U"/>
<dbReference type="SMR" id="Q8U475"/>
<dbReference type="STRING" id="186497.PF0217"/>
<dbReference type="PaxDb" id="186497-PF0217"/>
<dbReference type="KEGG" id="pfu:PF0217"/>
<dbReference type="PATRIC" id="fig|186497.12.peg.225"/>
<dbReference type="eggNOG" id="arCOG04109">
    <property type="taxonomic scope" value="Archaea"/>
</dbReference>
<dbReference type="HOGENOM" id="CLU_114645_3_0_2"/>
<dbReference type="OrthoDB" id="52456at2157"/>
<dbReference type="PhylomeDB" id="Q8U475"/>
<dbReference type="Proteomes" id="UP000001013">
    <property type="component" value="Chromosome"/>
</dbReference>
<dbReference type="GO" id="GO:1990904">
    <property type="term" value="C:ribonucleoprotein complex"/>
    <property type="evidence" value="ECO:0007669"/>
    <property type="project" value="UniProtKB-KW"/>
</dbReference>
<dbReference type="GO" id="GO:0005840">
    <property type="term" value="C:ribosome"/>
    <property type="evidence" value="ECO:0007669"/>
    <property type="project" value="UniProtKB-KW"/>
</dbReference>
<dbReference type="GO" id="GO:0070180">
    <property type="term" value="F:large ribosomal subunit rRNA binding"/>
    <property type="evidence" value="ECO:0007669"/>
    <property type="project" value="UniProtKB-UniRule"/>
</dbReference>
<dbReference type="GO" id="GO:0003735">
    <property type="term" value="F:structural constituent of ribosome"/>
    <property type="evidence" value="ECO:0007669"/>
    <property type="project" value="InterPro"/>
</dbReference>
<dbReference type="GO" id="GO:0008270">
    <property type="term" value="F:zinc ion binding"/>
    <property type="evidence" value="ECO:0007669"/>
    <property type="project" value="UniProtKB-UniRule"/>
</dbReference>
<dbReference type="GO" id="GO:0006412">
    <property type="term" value="P:translation"/>
    <property type="evidence" value="ECO:0007669"/>
    <property type="project" value="UniProtKB-UniRule"/>
</dbReference>
<dbReference type="FunFam" id="3.10.450.80:FF:000001">
    <property type="entry name" value="60S ribosomal protein L44"/>
    <property type="match status" value="1"/>
</dbReference>
<dbReference type="Gene3D" id="3.10.450.80">
    <property type="match status" value="1"/>
</dbReference>
<dbReference type="HAMAP" id="MF_01476">
    <property type="entry name" value="Ribosomal_L44e"/>
    <property type="match status" value="1"/>
</dbReference>
<dbReference type="InterPro" id="IPR000552">
    <property type="entry name" value="Ribosomal_eL44"/>
</dbReference>
<dbReference type="InterPro" id="IPR053708">
    <property type="entry name" value="Ribosomal_LSU_eL42"/>
</dbReference>
<dbReference type="InterPro" id="IPR011332">
    <property type="entry name" value="Ribosomal_zn-bd"/>
</dbReference>
<dbReference type="NCBIfam" id="NF004425">
    <property type="entry name" value="PRK05767.1"/>
    <property type="match status" value="1"/>
</dbReference>
<dbReference type="PANTHER" id="PTHR10369">
    <property type="entry name" value="60S RIBOSOMAL PROTEIN L36A/L44"/>
    <property type="match status" value="1"/>
</dbReference>
<dbReference type="Pfam" id="PF00935">
    <property type="entry name" value="Ribosomal_L44"/>
    <property type="match status" value="1"/>
</dbReference>
<dbReference type="SUPFAM" id="SSF57829">
    <property type="entry name" value="Zn-binding ribosomal proteins"/>
    <property type="match status" value="1"/>
</dbReference>
<dbReference type="PROSITE" id="PS01172">
    <property type="entry name" value="RIBOSOMAL_L44E"/>
    <property type="match status" value="1"/>
</dbReference>
<reference key="1">
    <citation type="journal article" date="1999" name="Genetics">
        <title>Divergence of the hyperthermophilic archaea Pyrococcus furiosus and P. horikoshii inferred from complete genomic sequences.</title>
        <authorList>
            <person name="Maeder D.L."/>
            <person name="Weiss R.B."/>
            <person name="Dunn D.M."/>
            <person name="Cherry J.L."/>
            <person name="Gonzalez J.M."/>
            <person name="DiRuggiero J."/>
            <person name="Robb F.T."/>
        </authorList>
    </citation>
    <scope>NUCLEOTIDE SEQUENCE [LARGE SCALE GENOMIC DNA]</scope>
    <source>
        <strain>ATCC 43587 / DSM 3638 / JCM 8422 / Vc1</strain>
    </source>
</reference>
<reference evidence="3" key="2">
    <citation type="journal article" date="2013" name="Nucleic Acids Res.">
        <title>Promiscuous behaviour of archaeal ribosomal proteins: implications for eukaryotic ribosome evolution.</title>
        <authorList>
            <person name="Armache J.P."/>
            <person name="Anger A.M."/>
            <person name="Marquez V."/>
            <person name="Franckenberg S."/>
            <person name="Frohlich T."/>
            <person name="Villa E."/>
            <person name="Berninghausen O."/>
            <person name="Thomm M."/>
            <person name="Arnold G.J."/>
            <person name="Beckmann R."/>
            <person name="Wilson D.N."/>
        </authorList>
    </citation>
    <scope>STRUCTURE BY ELECTRON MICROSCOPY (6.60 ANGSTROMS) IN THE 70S RIBOSOME</scope>
    <scope>SUBUNIT</scope>
</reference>
<organism>
    <name type="scientific">Pyrococcus furiosus (strain ATCC 43587 / DSM 3638 / JCM 8422 / Vc1)</name>
    <dbReference type="NCBI Taxonomy" id="186497"/>
    <lineage>
        <taxon>Archaea</taxon>
        <taxon>Methanobacteriati</taxon>
        <taxon>Methanobacteriota</taxon>
        <taxon>Thermococci</taxon>
        <taxon>Thermococcales</taxon>
        <taxon>Thermococcaceae</taxon>
        <taxon>Pyrococcus</taxon>
    </lineage>
</organism>
<protein>
    <recommendedName>
        <fullName evidence="1">Large ribosomal subunit protein eL42</fullName>
    </recommendedName>
    <alternativeName>
        <fullName>50S ribosomal protein L44e</fullName>
    </alternativeName>
</protein>